<organism>
    <name type="scientific">Rattus norvegicus</name>
    <name type="common">Rat</name>
    <dbReference type="NCBI Taxonomy" id="10116"/>
    <lineage>
        <taxon>Eukaryota</taxon>
        <taxon>Metazoa</taxon>
        <taxon>Chordata</taxon>
        <taxon>Craniata</taxon>
        <taxon>Vertebrata</taxon>
        <taxon>Euteleostomi</taxon>
        <taxon>Mammalia</taxon>
        <taxon>Eutheria</taxon>
        <taxon>Euarchontoglires</taxon>
        <taxon>Glires</taxon>
        <taxon>Rodentia</taxon>
        <taxon>Myomorpha</taxon>
        <taxon>Muroidea</taxon>
        <taxon>Muridae</taxon>
        <taxon>Murinae</taxon>
        <taxon>Rattus</taxon>
    </lineage>
</organism>
<feature type="chain" id="PRO_0000079337" description="DNA-directed RNA polymerase III subunit RPC9">
    <location>
        <begin position="1"/>
        <end position="148"/>
    </location>
</feature>
<feature type="region of interest" description="Disordered" evidence="4">
    <location>
        <begin position="124"/>
        <end position="148"/>
    </location>
</feature>
<keyword id="KW-0051">Antiviral defense</keyword>
<keyword id="KW-1003">Cell membrane</keyword>
<keyword id="KW-0240">DNA-directed RNA polymerase</keyword>
<keyword id="KW-0391">Immunity</keyword>
<keyword id="KW-0399">Innate immunity</keyword>
<keyword id="KW-0472">Membrane</keyword>
<keyword id="KW-0539">Nucleus</keyword>
<keyword id="KW-1185">Reference proteome</keyword>
<keyword id="KW-0804">Transcription</keyword>
<sequence>MEVKDANAALLSNYEVFQLLTDLKEQRKESGKNKHSAGQQNLNAITYETLKYISKTPCKNQSPAIVQEFLTAMKSHKLTKAEKLQLLNHRPMTAVEIQLMVEESEERLTEEQIEALLHTVTSILPAGPEDEQSKSTSNDAAMEEEEPA</sequence>
<proteinExistence type="evidence at transcript level"/>
<comment type="function">
    <text evidence="2 3">DNA-dependent RNA polymerase catalyzes the transcription of DNA into RNA using the four ribonucleoside triphosphates as substrates (By similarity). Specific peripheric component of RNA polymerase III (Pol III) which synthesizes small non-coding RNAs including 5S rRNA, snRNAs, tRNAs and miRNAs from at least 500 distinct genomic loci. With POLR3H/RPC8 forms a mobile stalk that protrudes from Pol III core and functions primarily in transcription initiation (By similarity). Pol III plays a key role in sensing and limiting infection by intracellular bacteria and DNA viruses. Acts as nuclear and cytosolic DNA sensor involved in innate immune response. Can sense non-self dsDNA that serves as template for transcription into dsRNA. The non-self RNA polymerase III transcripts, such as Epstein-Barr virus-encoded RNAs (EBERs) induce type I interferon and NF-kappa-B through the RIG-I pathway (By similarity).</text>
</comment>
<comment type="function">
    <text evidence="1">Accessory protein for the calcitonin gene-related peptide (CGRP) receptor. It modulates CGRP responsiveness in a variety of tissues.</text>
</comment>
<comment type="subunit">
    <text evidence="2">Component of the RNA polymerase III complex consisting of 17 subunits: a ten-subunit horseshoe-shaped catalytic core composed of POLR3A/RPC1, POLR3B/RPC2, POLR1C/RPAC1, POLR1D/RPAC2, POLR3K/RPC10, POLR2E/RPABC1, POLR2F/RPABC2, POLR2H/RPABC3, POLR2K/RPABC4 and POLR2L/RPABC5; a mobile stalk composed of two subunits POLR3H/RPC8 and CRCP/RPC9, protruding from the core and functioning primarily in transcription initiation; and additional subunits homologous to general transcription factors of the RNA polymerase II machinery, POLR3C/RPC3-POLR3F/RPC6-POLR3G/RPC7 heterotrimer required for transcription initiation and POLR3D/RPC4-POLR3E/RPC5 heterodimer involved in both transcription initiation and termination.</text>
</comment>
<comment type="subcellular location">
    <subcellularLocation>
        <location evidence="2">Nucleus</location>
    </subcellularLocation>
    <subcellularLocation>
        <location evidence="1">Cell membrane</location>
        <topology evidence="1">Peripheral membrane protein</topology>
        <orientation evidence="1">Cytoplasmic side</orientation>
    </subcellularLocation>
</comment>
<comment type="similarity">
    <text evidence="5">Belongs to the eukaryotic RPC9 RNA polymerase subunit family.</text>
</comment>
<name>RPC9_RAT</name>
<evidence type="ECO:0000250" key="1">
    <source>
        <dbReference type="UniProtKB" id="O35427"/>
    </source>
</evidence>
<evidence type="ECO:0000250" key="2">
    <source>
        <dbReference type="UniProtKB" id="O75575"/>
    </source>
</evidence>
<evidence type="ECO:0000250" key="3">
    <source>
        <dbReference type="UniProtKB" id="Q9C0Z9"/>
    </source>
</evidence>
<evidence type="ECO:0000256" key="4">
    <source>
        <dbReference type="SAM" id="MobiDB-lite"/>
    </source>
</evidence>
<evidence type="ECO:0000305" key="5"/>
<evidence type="ECO:0000312" key="6">
    <source>
        <dbReference type="RGD" id="620753"/>
    </source>
</evidence>
<reference key="1">
    <citation type="submission" date="2002-01" db="EMBL/GenBank/DDBJ databases">
        <title>Expression of CGRP receptor proteins in rat spleen.</title>
        <authorList>
            <person name="Li Y."/>
            <person name="Ji A."/>
            <person name="Schafer M.K."/>
        </authorList>
    </citation>
    <scope>NUCLEOTIDE SEQUENCE [MRNA]</scope>
    <source>
        <strain>Wistar</strain>
        <tissue>Spleen</tissue>
    </source>
</reference>
<reference key="2">
    <citation type="journal article" date="2004" name="Genome Res.">
        <title>The status, quality, and expansion of the NIH full-length cDNA project: the Mammalian Gene Collection (MGC).</title>
        <authorList>
            <consortium name="The MGC Project Team"/>
        </authorList>
    </citation>
    <scope>NUCLEOTIDE SEQUENCE [LARGE SCALE MRNA]</scope>
    <source>
        <tissue>Pituitary</tissue>
    </source>
</reference>
<reference key="3">
    <citation type="submission" date="1998-11" db="EMBL/GenBank/DDBJ databases">
        <authorList>
            <person name="Dickerson I.M."/>
            <person name="Luebke A.E."/>
            <person name="Dahl G.P."/>
        </authorList>
    </citation>
    <scope>NUCLEOTIDE SEQUENCE [MRNA] OF 25-75</scope>
</reference>
<accession>Q8VHM6</accession>
<accession>Q9Z0W9</accession>
<gene>
    <name evidence="6" type="primary">Crcp</name>
</gene>
<protein>
    <recommendedName>
        <fullName>DNA-directed RNA polymerase III subunit RPC9</fullName>
        <shortName>RNA polymerase III subunit C9</shortName>
    </recommendedName>
    <alternativeName>
        <fullName>Calcitonin gene-related peptide-receptor component protein</fullName>
        <shortName>CGRP-RCP</shortName>
        <shortName>CGRP-receptor component protein</shortName>
        <shortName>CGRPRCP</shortName>
    </alternativeName>
</protein>
<dbReference type="EMBL" id="AF440799">
    <property type="protein sequence ID" value="AAL57492.2"/>
    <property type="molecule type" value="mRNA"/>
</dbReference>
<dbReference type="EMBL" id="BC059117">
    <property type="protein sequence ID" value="AAH59117.1"/>
    <property type="molecule type" value="mRNA"/>
</dbReference>
<dbReference type="EMBL" id="AF103950">
    <property type="protein sequence ID" value="AAD16878.1"/>
    <property type="molecule type" value="mRNA"/>
</dbReference>
<dbReference type="RefSeq" id="NP_446122.1">
    <property type="nucleotide sequence ID" value="NM_053670.3"/>
</dbReference>
<dbReference type="SMR" id="Q8VHM6"/>
<dbReference type="FunCoup" id="Q8VHM6">
    <property type="interactions" value="600"/>
</dbReference>
<dbReference type="STRING" id="10116.ENSRNOP00000001202"/>
<dbReference type="PhosphoSitePlus" id="Q8VHM6"/>
<dbReference type="PaxDb" id="10116-ENSRNOP00000001202"/>
<dbReference type="Ensembl" id="ENSRNOT00000107624.1">
    <property type="protein sequence ID" value="ENSRNOP00000084882.1"/>
    <property type="gene ID" value="ENSRNOG00000000901.8"/>
</dbReference>
<dbReference type="GeneID" id="114205"/>
<dbReference type="KEGG" id="rno:114205"/>
<dbReference type="AGR" id="RGD:620753"/>
<dbReference type="CTD" id="27297"/>
<dbReference type="RGD" id="620753">
    <property type="gene designation" value="Crcp"/>
</dbReference>
<dbReference type="eggNOG" id="KOG4168">
    <property type="taxonomic scope" value="Eukaryota"/>
</dbReference>
<dbReference type="GeneTree" id="ENSGT00390000014189"/>
<dbReference type="InParanoid" id="Q8VHM6"/>
<dbReference type="OrthoDB" id="73325at9989"/>
<dbReference type="PhylomeDB" id="Q8VHM6"/>
<dbReference type="Reactome" id="R-RNO-76061">
    <property type="pathway name" value="RNA Polymerase III Transcription Initiation From Type 1 Promoter"/>
</dbReference>
<dbReference type="Reactome" id="R-RNO-76066">
    <property type="pathway name" value="RNA Polymerase III Transcription Initiation From Type 2 Promoter"/>
</dbReference>
<dbReference type="Reactome" id="R-RNO-76071">
    <property type="pathway name" value="RNA Polymerase III Transcription Initiation From Type 3 Promoter"/>
</dbReference>
<dbReference type="PRO" id="PR:Q8VHM6"/>
<dbReference type="Proteomes" id="UP000002494">
    <property type="component" value="Chromosome 12"/>
</dbReference>
<dbReference type="GO" id="GO:0001669">
    <property type="term" value="C:acrosomal vesicle"/>
    <property type="evidence" value="ECO:0000266"/>
    <property type="project" value="RGD"/>
</dbReference>
<dbReference type="GO" id="GO:0030424">
    <property type="term" value="C:axon"/>
    <property type="evidence" value="ECO:0000314"/>
    <property type="project" value="RGD"/>
</dbReference>
<dbReference type="GO" id="GO:0030425">
    <property type="term" value="C:dendrite"/>
    <property type="evidence" value="ECO:0000314"/>
    <property type="project" value="RGD"/>
</dbReference>
<dbReference type="GO" id="GO:0009360">
    <property type="term" value="C:DNA polymerase III complex"/>
    <property type="evidence" value="ECO:0000250"/>
    <property type="project" value="UniProtKB"/>
</dbReference>
<dbReference type="GO" id="GO:0043025">
    <property type="term" value="C:neuronal cell body"/>
    <property type="evidence" value="ECO:0000314"/>
    <property type="project" value="RGD"/>
</dbReference>
<dbReference type="GO" id="GO:0005886">
    <property type="term" value="C:plasma membrane"/>
    <property type="evidence" value="ECO:0007669"/>
    <property type="project" value="UniProtKB-SubCell"/>
</dbReference>
<dbReference type="GO" id="GO:0005666">
    <property type="term" value="C:RNA polymerase III complex"/>
    <property type="evidence" value="ECO:0000266"/>
    <property type="project" value="RGD"/>
</dbReference>
<dbReference type="GO" id="GO:0001635">
    <property type="term" value="F:calcitonin gene-related peptide receptor activity"/>
    <property type="evidence" value="ECO:0000266"/>
    <property type="project" value="RGD"/>
</dbReference>
<dbReference type="GO" id="GO:0003899">
    <property type="term" value="F:DNA-directed RNA polymerase activity"/>
    <property type="evidence" value="ECO:0000250"/>
    <property type="project" value="UniProtKB"/>
</dbReference>
<dbReference type="GO" id="GO:0000166">
    <property type="term" value="F:nucleotide binding"/>
    <property type="evidence" value="ECO:0007669"/>
    <property type="project" value="InterPro"/>
</dbReference>
<dbReference type="GO" id="GO:0051607">
    <property type="term" value="P:defense response to virus"/>
    <property type="evidence" value="ECO:0007669"/>
    <property type="project" value="UniProtKB-KW"/>
</dbReference>
<dbReference type="GO" id="GO:0045087">
    <property type="term" value="P:innate immune response"/>
    <property type="evidence" value="ECO:0007669"/>
    <property type="project" value="UniProtKB-KW"/>
</dbReference>
<dbReference type="GO" id="GO:0007218">
    <property type="term" value="P:neuropeptide signaling pathway"/>
    <property type="evidence" value="ECO:0000266"/>
    <property type="project" value="RGD"/>
</dbReference>
<dbReference type="GO" id="GO:0006383">
    <property type="term" value="P:transcription by RNA polymerase III"/>
    <property type="evidence" value="ECO:0000250"/>
    <property type="project" value="UniProtKB"/>
</dbReference>
<dbReference type="GO" id="GO:0006384">
    <property type="term" value="P:transcription initiation at RNA polymerase III promoter"/>
    <property type="evidence" value="ECO:0000318"/>
    <property type="project" value="GO_Central"/>
</dbReference>
<dbReference type="FunFam" id="1.20.1250.40:FF:000002">
    <property type="entry name" value="DNA-directed RNA polymerase III subunit RPC9"/>
    <property type="match status" value="1"/>
</dbReference>
<dbReference type="Gene3D" id="1.20.1250.40">
    <property type="match status" value="1"/>
</dbReference>
<dbReference type="InterPro" id="IPR010997">
    <property type="entry name" value="HRDC-like_sf"/>
</dbReference>
<dbReference type="InterPro" id="IPR006590">
    <property type="entry name" value="RNA_pol_Rpb4/RPC9_core"/>
</dbReference>
<dbReference type="InterPro" id="IPR005574">
    <property type="entry name" value="Rpb4/RPC9"/>
</dbReference>
<dbReference type="InterPro" id="IPR038324">
    <property type="entry name" value="Rpb4/RPC9_sf"/>
</dbReference>
<dbReference type="InterPro" id="IPR038846">
    <property type="entry name" value="RPC9"/>
</dbReference>
<dbReference type="PANTHER" id="PTHR15561">
    <property type="entry name" value="CALCITONIN GENE-RELATED PEPTIDE-RECEPTOR COMPONENT PROTEIN"/>
    <property type="match status" value="1"/>
</dbReference>
<dbReference type="PANTHER" id="PTHR15561:SF0">
    <property type="entry name" value="DNA-DIRECTED RNA POLYMERASE III SUBUNIT RPC9"/>
    <property type="match status" value="1"/>
</dbReference>
<dbReference type="Pfam" id="PF03874">
    <property type="entry name" value="RNA_pol_Rpb4"/>
    <property type="match status" value="1"/>
</dbReference>
<dbReference type="SMART" id="SM00657">
    <property type="entry name" value="RPOL4c"/>
    <property type="match status" value="1"/>
</dbReference>
<dbReference type="SUPFAM" id="SSF47819">
    <property type="entry name" value="HRDC-like"/>
    <property type="match status" value="1"/>
</dbReference>